<accession>Q8FN37</accession>
<dbReference type="EC" id="3.4.21.92" evidence="1"/>
<dbReference type="EMBL" id="BA000035">
    <property type="protein sequence ID" value="BAC19121.1"/>
    <property type="molecule type" value="Genomic_DNA"/>
</dbReference>
<dbReference type="RefSeq" id="WP_006768315.1">
    <property type="nucleotide sequence ID" value="NC_004369.1"/>
</dbReference>
<dbReference type="SMR" id="Q8FN37"/>
<dbReference type="STRING" id="196164.gene:10742742"/>
<dbReference type="MEROPS" id="S14.009"/>
<dbReference type="KEGG" id="cef:CE2311"/>
<dbReference type="eggNOG" id="COG0740">
    <property type="taxonomic scope" value="Bacteria"/>
</dbReference>
<dbReference type="HOGENOM" id="CLU_058707_3_2_11"/>
<dbReference type="OrthoDB" id="9802800at2"/>
<dbReference type="Proteomes" id="UP000001409">
    <property type="component" value="Chromosome"/>
</dbReference>
<dbReference type="GO" id="GO:0005737">
    <property type="term" value="C:cytoplasm"/>
    <property type="evidence" value="ECO:0007669"/>
    <property type="project" value="UniProtKB-SubCell"/>
</dbReference>
<dbReference type="GO" id="GO:0009368">
    <property type="term" value="C:endopeptidase Clp complex"/>
    <property type="evidence" value="ECO:0007669"/>
    <property type="project" value="TreeGrafter"/>
</dbReference>
<dbReference type="GO" id="GO:0004176">
    <property type="term" value="F:ATP-dependent peptidase activity"/>
    <property type="evidence" value="ECO:0007669"/>
    <property type="project" value="InterPro"/>
</dbReference>
<dbReference type="GO" id="GO:0051117">
    <property type="term" value="F:ATPase binding"/>
    <property type="evidence" value="ECO:0007669"/>
    <property type="project" value="TreeGrafter"/>
</dbReference>
<dbReference type="GO" id="GO:0004252">
    <property type="term" value="F:serine-type endopeptidase activity"/>
    <property type="evidence" value="ECO:0007669"/>
    <property type="project" value="UniProtKB-UniRule"/>
</dbReference>
<dbReference type="GO" id="GO:0006515">
    <property type="term" value="P:protein quality control for misfolded or incompletely synthesized proteins"/>
    <property type="evidence" value="ECO:0007669"/>
    <property type="project" value="TreeGrafter"/>
</dbReference>
<dbReference type="CDD" id="cd07017">
    <property type="entry name" value="S14_ClpP_2"/>
    <property type="match status" value="1"/>
</dbReference>
<dbReference type="FunFam" id="3.90.226.10:FF:000002">
    <property type="entry name" value="ATP-dependent Clp protease proteolytic subunit"/>
    <property type="match status" value="1"/>
</dbReference>
<dbReference type="Gene3D" id="3.90.226.10">
    <property type="entry name" value="2-enoyl-CoA Hydratase, Chain A, domain 1"/>
    <property type="match status" value="1"/>
</dbReference>
<dbReference type="HAMAP" id="MF_00444">
    <property type="entry name" value="ClpP"/>
    <property type="match status" value="1"/>
</dbReference>
<dbReference type="InterPro" id="IPR001907">
    <property type="entry name" value="ClpP"/>
</dbReference>
<dbReference type="InterPro" id="IPR029045">
    <property type="entry name" value="ClpP/crotonase-like_dom_sf"/>
</dbReference>
<dbReference type="InterPro" id="IPR023562">
    <property type="entry name" value="ClpP/TepA"/>
</dbReference>
<dbReference type="InterPro" id="IPR033135">
    <property type="entry name" value="ClpP_His_AS"/>
</dbReference>
<dbReference type="InterPro" id="IPR018215">
    <property type="entry name" value="ClpP_Ser_AS"/>
</dbReference>
<dbReference type="NCBIfam" id="NF001368">
    <property type="entry name" value="PRK00277.1"/>
    <property type="match status" value="1"/>
</dbReference>
<dbReference type="NCBIfam" id="NF009205">
    <property type="entry name" value="PRK12553.1"/>
    <property type="match status" value="1"/>
</dbReference>
<dbReference type="PANTHER" id="PTHR10381">
    <property type="entry name" value="ATP-DEPENDENT CLP PROTEASE PROTEOLYTIC SUBUNIT"/>
    <property type="match status" value="1"/>
</dbReference>
<dbReference type="PANTHER" id="PTHR10381:SF26">
    <property type="entry name" value="ATP-DEPENDENT CLP PROTEASE PROTEOLYTIC SUBUNIT-LIKE-RELATED"/>
    <property type="match status" value="1"/>
</dbReference>
<dbReference type="Pfam" id="PF00574">
    <property type="entry name" value="CLP_protease"/>
    <property type="match status" value="1"/>
</dbReference>
<dbReference type="PRINTS" id="PR00127">
    <property type="entry name" value="CLPPROTEASEP"/>
</dbReference>
<dbReference type="SUPFAM" id="SSF52096">
    <property type="entry name" value="ClpP/crotonase"/>
    <property type="match status" value="1"/>
</dbReference>
<dbReference type="PROSITE" id="PS00382">
    <property type="entry name" value="CLP_PROTEASE_HIS"/>
    <property type="match status" value="1"/>
</dbReference>
<dbReference type="PROSITE" id="PS00381">
    <property type="entry name" value="CLP_PROTEASE_SER"/>
    <property type="match status" value="1"/>
</dbReference>
<proteinExistence type="inferred from homology"/>
<evidence type="ECO:0000255" key="1">
    <source>
        <dbReference type="HAMAP-Rule" id="MF_00444"/>
    </source>
</evidence>
<protein>
    <recommendedName>
        <fullName evidence="1">ATP-dependent Clp protease proteolytic subunit 1</fullName>
        <ecNumber evidence="1">3.4.21.92</ecNumber>
    </recommendedName>
    <alternativeName>
        <fullName evidence="1">Endopeptidase Clp 1</fullName>
    </alternativeName>
</protein>
<organism>
    <name type="scientific">Corynebacterium efficiens (strain DSM 44549 / YS-314 / AJ 12310 / JCM 11189 / NBRC 100395)</name>
    <dbReference type="NCBI Taxonomy" id="196164"/>
    <lineage>
        <taxon>Bacteria</taxon>
        <taxon>Bacillati</taxon>
        <taxon>Actinomycetota</taxon>
        <taxon>Actinomycetes</taxon>
        <taxon>Mycobacteriales</taxon>
        <taxon>Corynebacteriaceae</taxon>
        <taxon>Corynebacterium</taxon>
    </lineage>
</organism>
<gene>
    <name evidence="1" type="primary">clpP1</name>
    <name type="ordered locus">CE2311</name>
</gene>
<name>CLPP1_COREF</name>
<keyword id="KW-0963">Cytoplasm</keyword>
<keyword id="KW-0378">Hydrolase</keyword>
<keyword id="KW-0645">Protease</keyword>
<keyword id="KW-1185">Reference proteome</keyword>
<keyword id="KW-0720">Serine protease</keyword>
<reference key="1">
    <citation type="journal article" date="2003" name="Genome Res.">
        <title>Comparative complete genome sequence analysis of the amino acid replacements responsible for the thermostability of Corynebacterium efficiens.</title>
        <authorList>
            <person name="Nishio Y."/>
            <person name="Nakamura Y."/>
            <person name="Kawarabayasi Y."/>
            <person name="Usuda Y."/>
            <person name="Kimura E."/>
            <person name="Sugimoto S."/>
            <person name="Matsui K."/>
            <person name="Yamagishi A."/>
            <person name="Kikuchi H."/>
            <person name="Ikeo K."/>
            <person name="Gojobori T."/>
        </authorList>
    </citation>
    <scope>NUCLEOTIDE SEQUENCE [LARGE SCALE GENOMIC DNA]</scope>
    <source>
        <strain>DSM 44549 / YS-314 / AJ 12310 / JCM 11189 / NBRC 100395</strain>
    </source>
</reference>
<feature type="chain" id="PRO_0000179543" description="ATP-dependent Clp protease proteolytic subunit 1">
    <location>
        <begin position="1"/>
        <end position="208"/>
    </location>
</feature>
<feature type="active site" description="Nucleophile" evidence="1">
    <location>
        <position position="108"/>
    </location>
</feature>
<feature type="active site" evidence="1">
    <location>
        <position position="133"/>
    </location>
</feature>
<comment type="function">
    <text evidence="1">Cleaves peptides in various proteins in a process that requires ATP hydrolysis. Has a chymotrypsin-like activity. Plays a major role in the degradation of misfolded proteins.</text>
</comment>
<comment type="catalytic activity">
    <reaction evidence="1">
        <text>Hydrolysis of proteins to small peptides in the presence of ATP and magnesium. alpha-casein is the usual test substrate. In the absence of ATP, only oligopeptides shorter than five residues are hydrolyzed (such as succinyl-Leu-Tyr-|-NHMec, and Leu-Tyr-Leu-|-Tyr-Trp, in which cleavage of the -Tyr-|-Leu- and -Tyr-|-Trp bonds also occurs).</text>
        <dbReference type="EC" id="3.4.21.92"/>
    </reaction>
</comment>
<comment type="subunit">
    <text evidence="1">Fourteen ClpP subunits assemble into 2 heptameric rings which stack back to back to give a disk-like structure with a central cavity, resembling the structure of eukaryotic proteasomes.</text>
</comment>
<comment type="subcellular location">
    <subcellularLocation>
        <location evidence="1">Cytoplasm</location>
    </subcellularLocation>
</comment>
<comment type="similarity">
    <text evidence="1">Belongs to the peptidase S14 family.</text>
</comment>
<sequence length="208" mass="22883">MSNGFQMPSSRYVLPSFIEQSAYGTKETNPYAKLFEERIIFLGTQVDDTSANDIMAQLLVLEGMDPDRDITMYINSPGGSFTALMAIYDTMQYVRPDVQTVCLGQAASAAAVLLAAGAPGKRAALPNARVLIHQPATQGTQGQVSDLEIQAAEIERMRKLMETTLSQHTGKTPEQIRIDTDRDKILTAEGALEYGIIDQVFDYRKLNT</sequence>